<protein>
    <recommendedName>
        <fullName>CRISPR-associated protein Csy3</fullName>
    </recommendedName>
</protein>
<accession>Q02MM1</accession>
<organism>
    <name type="scientific">Pseudomonas aeruginosa (strain UCBPP-PA14)</name>
    <dbReference type="NCBI Taxonomy" id="208963"/>
    <lineage>
        <taxon>Bacteria</taxon>
        <taxon>Pseudomonadati</taxon>
        <taxon>Pseudomonadota</taxon>
        <taxon>Gammaproteobacteria</taxon>
        <taxon>Pseudomonadales</taxon>
        <taxon>Pseudomonadaceae</taxon>
        <taxon>Pseudomonas</taxon>
    </lineage>
</organism>
<reference key="1">
    <citation type="journal article" date="2006" name="Genome Biol.">
        <title>Genomic analysis reveals that Pseudomonas aeruginosa virulence is combinatorial.</title>
        <authorList>
            <person name="Lee D.G."/>
            <person name="Urbach J.M."/>
            <person name="Wu G."/>
            <person name="Liberati N.T."/>
            <person name="Feinbaum R.L."/>
            <person name="Miyata S."/>
            <person name="Diggins L.T."/>
            <person name="He J."/>
            <person name="Saucier M."/>
            <person name="Deziel E."/>
            <person name="Friedman L."/>
            <person name="Li L."/>
            <person name="Grills G."/>
            <person name="Montgomery K."/>
            <person name="Kucherlapati R."/>
            <person name="Rahme L.G."/>
            <person name="Ausubel F.M."/>
        </authorList>
    </citation>
    <scope>NUCLEOTIDE SEQUENCE [LARGE SCALE GENOMIC DNA]</scope>
    <source>
        <strain>UCBPP-PA14</strain>
    </source>
</reference>
<reference key="2">
    <citation type="journal article" date="2011" name="J. Bacteriol.">
        <title>Non-identity-mediated CRISPR-bacteriophage interaction mediated via the Csy and Cas3 proteins.</title>
        <authorList>
            <person name="Cady K.C."/>
            <person name="O'Toole G.A."/>
        </authorList>
    </citation>
    <scope>FUNCTION IN INHIBITION OF BIOFILM FORMATION</scope>
    <scope>DISRUPTION PHENOTYPE</scope>
    <source>
        <strain>UCBPP-PA14</strain>
    </source>
</reference>
<reference key="3">
    <citation type="journal article" date="2011" name="Microbiology">
        <title>Prevalence, conservation and functional analysis of Yersinia and Escherichia CRISPR regions in clinical Pseudomonas aeruginosa isolates.</title>
        <authorList>
            <person name="Cady K.C."/>
            <person name="White A.S."/>
            <person name="Hammond J.H."/>
            <person name="Abendroth M.D."/>
            <person name="Karthikeyan R.S."/>
            <person name="Lalitha P."/>
            <person name="Zegans M.E."/>
            <person name="O'Toole G.A."/>
        </authorList>
    </citation>
    <scope>NO ROLE IN PHAGE PROTECTION</scope>
    <scope>DISRUPTION PHENOTYPE</scope>
    <source>
        <strain>UCBPP-PA14</strain>
    </source>
</reference>
<reference key="4">
    <citation type="journal article" date="2011" name="Proc. Natl. Acad. Sci. U.S.A.">
        <title>RNA-guided complex from a bacterial immune system enhances target recognition through seed sequence interactions.</title>
        <authorList>
            <person name="Wiedenheft B."/>
            <person name="van Duijn E."/>
            <person name="Bultema J.B."/>
            <person name="Waghmare S.P."/>
            <person name="Zhou K."/>
            <person name="Barendregt A."/>
            <person name="Westphal W."/>
            <person name="Heck A.J."/>
            <person name="Boekema E.J."/>
            <person name="Dickman M.J."/>
            <person name="Doudna J.A."/>
        </authorList>
    </citation>
    <scope>SUBUNIT</scope>
    <scope>MASS SPECTROMETRY</scope>
    <source>
        <strain>UCBPP-PA14</strain>
    </source>
</reference>
<reference key="5">
    <citation type="journal article" date="2012" name="EMBO J.">
        <title>Csy4 relies on an unusual catalytic dyad to position and cleave CRISPR RNA.</title>
        <authorList>
            <person name="Haurwitz R.E."/>
            <person name="Sternberg S.H."/>
            <person name="Doudna J.A."/>
        </authorList>
    </citation>
    <scope>FUNCTION IN CRRNA FORMATION</scope>
    <scope>SUBUNIT</scope>
    <source>
        <strain>UCBPP-PA14</strain>
    </source>
</reference>
<dbReference type="EMBL" id="CP000438">
    <property type="protein sequence ID" value="ABJ11604.1"/>
    <property type="molecule type" value="Genomic_DNA"/>
</dbReference>
<dbReference type="RefSeq" id="WP_003139222.1">
    <property type="nucleotide sequence ID" value="NZ_CP034244.1"/>
</dbReference>
<dbReference type="PDB" id="5UZ9">
    <property type="method" value="EM"/>
    <property type="resolution" value="3.40 A"/>
    <property type="chains" value="C/D/E/F/G/H=2-342"/>
</dbReference>
<dbReference type="PDB" id="5XLO">
    <property type="method" value="EM"/>
    <property type="resolution" value="3.80 A"/>
    <property type="chains" value="A/B/C/D/E/F=1-342"/>
</dbReference>
<dbReference type="PDB" id="5XLP">
    <property type="method" value="EM"/>
    <property type="resolution" value="4.20 A"/>
    <property type="chains" value="C/D/E/F=1-342"/>
</dbReference>
<dbReference type="PDB" id="6B44">
    <property type="method" value="EM"/>
    <property type="resolution" value="2.90 A"/>
    <property type="chains" value="C/D/E/F/G/H=1-342"/>
</dbReference>
<dbReference type="PDB" id="6B45">
    <property type="method" value="EM"/>
    <property type="resolution" value="3.50 A"/>
    <property type="chains" value="C/D/E/F/G/H=1-342"/>
</dbReference>
<dbReference type="PDB" id="6B46">
    <property type="method" value="EM"/>
    <property type="resolution" value="3.10 A"/>
    <property type="chains" value="C/D/E/F/G/H=1-342"/>
</dbReference>
<dbReference type="PDB" id="6B47">
    <property type="method" value="EM"/>
    <property type="resolution" value="3.20 A"/>
    <property type="chains" value="C/D/E/F/G/H=1-342"/>
</dbReference>
<dbReference type="PDB" id="6B48">
    <property type="method" value="EM"/>
    <property type="resolution" value="3.60 A"/>
    <property type="chains" value="C/D/E/F/G/H=1-342"/>
</dbReference>
<dbReference type="PDB" id="6NE0">
    <property type="method" value="EM"/>
    <property type="resolution" value="3.40 A"/>
    <property type="chains" value="C/D/E/F/G/H=1-342"/>
</dbReference>
<dbReference type="PDB" id="6VQV">
    <property type="method" value="EM"/>
    <property type="resolution" value="2.57 A"/>
    <property type="chains" value="E/F/G/H/I/J=2-342"/>
</dbReference>
<dbReference type="PDB" id="6VQW">
    <property type="method" value="EM"/>
    <property type="resolution" value="3.42 A"/>
    <property type="chains" value="D/E/F/G/H/I=2-342"/>
</dbReference>
<dbReference type="PDB" id="6VQX">
    <property type="method" value="EM"/>
    <property type="resolution" value="3.15 A"/>
    <property type="chains" value="D/E/F/G/H/I=2-342"/>
</dbReference>
<dbReference type="PDB" id="6W1X">
    <property type="method" value="EM"/>
    <property type="resolution" value="3.90 A"/>
    <property type="chains" value="C/D/E/F/G/H=2-342"/>
</dbReference>
<dbReference type="PDB" id="6WHI">
    <property type="method" value="EM"/>
    <property type="resolution" value="4.20 A"/>
    <property type="chains" value="C/D/E/F/G/H=2-342"/>
</dbReference>
<dbReference type="PDB" id="7ECV">
    <property type="method" value="EM"/>
    <property type="resolution" value="3.43 A"/>
    <property type="chains" value="C/D/E/F/G/H=1-342"/>
</dbReference>
<dbReference type="PDB" id="7ECW">
    <property type="method" value="EM"/>
    <property type="resolution" value="3.10 A"/>
    <property type="chains" value="C/D/E/F/G/H=1-342"/>
</dbReference>
<dbReference type="PDB" id="7ELM">
    <property type="method" value="EM"/>
    <property type="resolution" value="2.88 A"/>
    <property type="chains" value="C/D/E/F/G/H/M/N/O/P/Q/R=1-342"/>
</dbReference>
<dbReference type="PDB" id="7ELN">
    <property type="method" value="EM"/>
    <property type="resolution" value="3.00 A"/>
    <property type="chains" value="C/D/E/F/G/H/M/N/O/P/Q/R=1-342"/>
</dbReference>
<dbReference type="PDB" id="7EQG">
    <property type="method" value="EM"/>
    <property type="resolution" value="3.20 A"/>
    <property type="chains" value="D/E/F/G/H/I=1-342"/>
</dbReference>
<dbReference type="PDB" id="7JZW">
    <property type="method" value="EM"/>
    <property type="resolution" value="3.20 A"/>
    <property type="chains" value="D/E/F/G/H/I=1-342"/>
</dbReference>
<dbReference type="PDB" id="7JZX">
    <property type="method" value="EM"/>
    <property type="resolution" value="3.40 A"/>
    <property type="chains" value="D/E/F/G/H/I=1-342"/>
</dbReference>
<dbReference type="PDB" id="7JZY">
    <property type="method" value="EM"/>
    <property type="resolution" value="3.60 A"/>
    <property type="chains" value="D/E/F/G/H/I=1-342"/>
</dbReference>
<dbReference type="PDB" id="7JZZ">
    <property type="method" value="EM"/>
    <property type="resolution" value="3.20 A"/>
    <property type="chains" value="D/E/F/G/H/I=1-342"/>
</dbReference>
<dbReference type="PDB" id="7T3J">
    <property type="method" value="EM"/>
    <property type="resolution" value="3.20 A"/>
    <property type="chains" value="D/E/F/G/H/I=2-342"/>
</dbReference>
<dbReference type="PDB" id="7T3K">
    <property type="method" value="EM"/>
    <property type="resolution" value="3.50 A"/>
    <property type="chains" value="D/E/F/G/H/I/d/e/f/g/h/i=2-342"/>
</dbReference>
<dbReference type="PDB" id="7T3L">
    <property type="method" value="EM"/>
    <property type="resolution" value="3.60 A"/>
    <property type="chains" value="D/E/F/G/H/I/d/e/f/g/h/i=2-342"/>
</dbReference>
<dbReference type="PDB" id="7TAW">
    <property type="method" value="EM"/>
    <property type="resolution" value="2.70 A"/>
    <property type="chains" value="D/E/F/G/H/I/d/e/f/g/h/i=2-342"/>
</dbReference>
<dbReference type="PDB" id="7TAX">
    <property type="method" value="EM"/>
    <property type="resolution" value="2.80 A"/>
    <property type="chains" value="D/E/F/G/H/I=2-342"/>
</dbReference>
<dbReference type="PDB" id="7WE6">
    <property type="method" value="EM"/>
    <property type="resolution" value="3.20 A"/>
    <property type="chains" value="C/D/E/F/G/H/M/N/O/P/Q/R=1-342"/>
</dbReference>
<dbReference type="PDB" id="8JDI">
    <property type="method" value="X-ray"/>
    <property type="resolution" value="3.37 A"/>
    <property type="chains" value="A/B/C/D=1-342"/>
</dbReference>
<dbReference type="PDBsum" id="5UZ9"/>
<dbReference type="PDBsum" id="5XLO"/>
<dbReference type="PDBsum" id="5XLP"/>
<dbReference type="PDBsum" id="6B44"/>
<dbReference type="PDBsum" id="6B45"/>
<dbReference type="PDBsum" id="6B46"/>
<dbReference type="PDBsum" id="6B47"/>
<dbReference type="PDBsum" id="6B48"/>
<dbReference type="PDBsum" id="6NE0"/>
<dbReference type="PDBsum" id="6VQV"/>
<dbReference type="PDBsum" id="6VQW"/>
<dbReference type="PDBsum" id="6VQX"/>
<dbReference type="PDBsum" id="6W1X"/>
<dbReference type="PDBsum" id="6WHI"/>
<dbReference type="PDBsum" id="7ECV"/>
<dbReference type="PDBsum" id="7ECW"/>
<dbReference type="PDBsum" id="7ELM"/>
<dbReference type="PDBsum" id="7ELN"/>
<dbReference type="PDBsum" id="7EQG"/>
<dbReference type="PDBsum" id="7JZW"/>
<dbReference type="PDBsum" id="7JZX"/>
<dbReference type="PDBsum" id="7JZY"/>
<dbReference type="PDBsum" id="7JZZ"/>
<dbReference type="PDBsum" id="7T3J"/>
<dbReference type="PDBsum" id="7T3K"/>
<dbReference type="PDBsum" id="7T3L"/>
<dbReference type="PDBsum" id="7TAW"/>
<dbReference type="PDBsum" id="7TAX"/>
<dbReference type="PDBsum" id="7WE6"/>
<dbReference type="PDBsum" id="8JDI"/>
<dbReference type="EMDB" id="EMD-21517"/>
<dbReference type="EMDB" id="EMD-6729"/>
<dbReference type="EMDB" id="EMD-6731"/>
<dbReference type="EMDB" id="EMD-7048"/>
<dbReference type="EMDB" id="EMD-7049"/>
<dbReference type="EMDB" id="EMD-7050"/>
<dbReference type="EMDB" id="EMD-7051"/>
<dbReference type="EMDB" id="EMD-7052"/>
<dbReference type="EMDB" id="EMD-8624"/>
<dbReference type="EMDB" id="EMD-9191"/>
<dbReference type="SMR" id="Q02MM1"/>
<dbReference type="DIP" id="DIP-59680N"/>
<dbReference type="IntAct" id="Q02MM1">
    <property type="interactions" value="5"/>
</dbReference>
<dbReference type="KEGG" id="pau:PA14_33310"/>
<dbReference type="PseudoCAP" id="PA14_33310"/>
<dbReference type="HOGENOM" id="CLU_063672_0_0_6"/>
<dbReference type="BioCyc" id="PAER208963:G1G74-2803-MONOMER"/>
<dbReference type="Proteomes" id="UP000000653">
    <property type="component" value="Chromosome"/>
</dbReference>
<dbReference type="GO" id="GO:0051607">
    <property type="term" value="P:defense response to virus"/>
    <property type="evidence" value="ECO:0007669"/>
    <property type="project" value="UniProtKB-KW"/>
</dbReference>
<dbReference type="CDD" id="cd09737">
    <property type="entry name" value="Csy3_I-F"/>
    <property type="match status" value="1"/>
</dbReference>
<dbReference type="InterPro" id="IPR013399">
    <property type="entry name" value="CRISPR-assoc_prot_Csy3"/>
</dbReference>
<dbReference type="NCBIfam" id="TIGR02566">
    <property type="entry name" value="cas_Csy3"/>
    <property type="match status" value="1"/>
</dbReference>
<dbReference type="Pfam" id="PF09615">
    <property type="entry name" value="Cas_Csy3"/>
    <property type="match status" value="1"/>
</dbReference>
<name>CSY3_PSEAB</name>
<keyword id="KW-0002">3D-structure</keyword>
<keyword id="KW-0051">Antiviral defense</keyword>
<feature type="chain" id="PRO_0000417878" description="CRISPR-associated protein Csy3">
    <location>
        <begin position="1"/>
        <end position="342"/>
    </location>
</feature>
<feature type="strand" evidence="12">
    <location>
        <begin position="12"/>
        <end position="14"/>
    </location>
</feature>
<feature type="strand" evidence="8">
    <location>
        <begin position="17"/>
        <end position="20"/>
    </location>
</feature>
<feature type="strand" evidence="8">
    <location>
        <begin position="23"/>
        <end position="28"/>
    </location>
</feature>
<feature type="helix" evidence="12">
    <location>
        <begin position="33"/>
        <end position="35"/>
    </location>
</feature>
<feature type="helix" evidence="7">
    <location>
        <begin position="36"/>
        <end position="38"/>
    </location>
</feature>
<feature type="strand" evidence="8">
    <location>
        <begin position="45"/>
        <end position="50"/>
    </location>
</feature>
<feature type="strand" evidence="12">
    <location>
        <begin position="59"/>
        <end position="61"/>
    </location>
</feature>
<feature type="helix" evidence="8">
    <location>
        <begin position="64"/>
        <end position="70"/>
    </location>
</feature>
<feature type="strand" evidence="8">
    <location>
        <begin position="71"/>
        <end position="73"/>
    </location>
</feature>
<feature type="strand" evidence="8">
    <location>
        <begin position="76"/>
        <end position="81"/>
    </location>
</feature>
<feature type="strand" evidence="9">
    <location>
        <begin position="86"/>
        <end position="88"/>
    </location>
</feature>
<feature type="strand" evidence="8">
    <location>
        <begin position="90"/>
        <end position="99"/>
    </location>
</feature>
<feature type="strand" evidence="10">
    <location>
        <begin position="107"/>
        <end position="110"/>
    </location>
</feature>
<feature type="helix" evidence="8">
    <location>
        <begin position="112"/>
        <end position="128"/>
    </location>
</feature>
<feature type="strand" evidence="12">
    <location>
        <begin position="129"/>
        <end position="131"/>
    </location>
</feature>
<feature type="helix" evidence="8">
    <location>
        <begin position="132"/>
        <end position="143"/>
    </location>
</feature>
<feature type="turn" evidence="8">
    <location>
        <begin position="144"/>
        <end position="147"/>
    </location>
</feature>
<feature type="strand" evidence="8">
    <location>
        <begin position="148"/>
        <end position="152"/>
    </location>
</feature>
<feature type="strand" evidence="8">
    <location>
        <begin position="158"/>
        <end position="173"/>
    </location>
</feature>
<feature type="strand" evidence="8">
    <location>
        <begin position="176"/>
        <end position="178"/>
    </location>
</feature>
<feature type="strand" evidence="8">
    <location>
        <begin position="183"/>
        <end position="185"/>
    </location>
</feature>
<feature type="helix" evidence="8">
    <location>
        <begin position="193"/>
        <end position="204"/>
    </location>
</feature>
<feature type="strand" evidence="8">
    <location>
        <begin position="209"/>
        <end position="217"/>
    </location>
</feature>
<feature type="strand" evidence="10">
    <location>
        <begin position="234"/>
        <end position="236"/>
    </location>
</feature>
<feature type="strand" evidence="12">
    <location>
        <begin position="238"/>
        <end position="240"/>
    </location>
</feature>
<feature type="strand" evidence="11">
    <location>
        <begin position="244"/>
        <end position="246"/>
    </location>
</feature>
<feature type="strand" evidence="8">
    <location>
        <begin position="248"/>
        <end position="255"/>
    </location>
</feature>
<feature type="helix" evidence="8">
    <location>
        <begin position="257"/>
        <end position="260"/>
    </location>
</feature>
<feature type="helix" evidence="8">
    <location>
        <begin position="261"/>
        <end position="263"/>
    </location>
</feature>
<feature type="strand" evidence="8">
    <location>
        <begin position="265"/>
        <end position="268"/>
    </location>
</feature>
<feature type="strand" evidence="8">
    <location>
        <begin position="271"/>
        <end position="273"/>
    </location>
</feature>
<feature type="strand" evidence="6">
    <location>
        <begin position="275"/>
        <end position="277"/>
    </location>
</feature>
<feature type="helix" evidence="12">
    <location>
        <begin position="284"/>
        <end position="286"/>
    </location>
</feature>
<feature type="turn" evidence="8">
    <location>
        <begin position="289"/>
        <end position="291"/>
    </location>
</feature>
<feature type="strand" evidence="12">
    <location>
        <begin position="293"/>
        <end position="296"/>
    </location>
</feature>
<feature type="strand" evidence="8">
    <location>
        <begin position="298"/>
        <end position="301"/>
    </location>
</feature>
<feature type="helix" evidence="8">
    <location>
        <begin position="304"/>
        <end position="312"/>
    </location>
</feature>
<feature type="turn" evidence="6">
    <location>
        <begin position="320"/>
        <end position="322"/>
    </location>
</feature>
<feature type="helix" evidence="8">
    <location>
        <begin position="324"/>
        <end position="332"/>
    </location>
</feature>
<feature type="strand" evidence="12">
    <location>
        <begin position="334"/>
        <end position="336"/>
    </location>
</feature>
<evidence type="ECO:0000269" key="1">
    <source>
    </source>
</evidence>
<evidence type="ECO:0000269" key="2">
    <source>
    </source>
</evidence>
<evidence type="ECO:0000269" key="3">
    <source>
    </source>
</evidence>
<evidence type="ECO:0000269" key="4">
    <source>
    </source>
</evidence>
<evidence type="ECO:0000305" key="5"/>
<evidence type="ECO:0007829" key="6">
    <source>
        <dbReference type="PDB" id="6B44"/>
    </source>
</evidence>
<evidence type="ECO:0007829" key="7">
    <source>
        <dbReference type="PDB" id="6B47"/>
    </source>
</evidence>
<evidence type="ECO:0007829" key="8">
    <source>
        <dbReference type="PDB" id="6VQV"/>
    </source>
</evidence>
<evidence type="ECO:0007829" key="9">
    <source>
        <dbReference type="PDB" id="7ECW"/>
    </source>
</evidence>
<evidence type="ECO:0007829" key="10">
    <source>
        <dbReference type="PDB" id="7ELM"/>
    </source>
</evidence>
<evidence type="ECO:0007829" key="11">
    <source>
        <dbReference type="PDB" id="7T3J"/>
    </source>
</evidence>
<evidence type="ECO:0007829" key="12">
    <source>
        <dbReference type="PDB" id="7TAW"/>
    </source>
</evidence>
<sequence length="342" mass="37530">MSKPILSTASVLAFERKLDPSDALMSAGAWAQRDASQEWPAVTVREKSVRGTISNRLKTKDRDPAKLDASIQSPNLQTVDVANLPSDADTLKVRFTLRVLGGAGTPSACNDAAYRDKLLQTVATYVNDQGFAELARRYAHNLANARFLWRNRVGAEAVEVRINHIRQGEVARAWRFDALAIGLRDFKADAELDALAELIASGLSGSGHVLLEVVAFARIGDGQEVFPSQELILDKGDKKGQKSKTLYSVRDAAAIHSQKIGNALRTIDTWYPDEDGLGPIAVEPYGSVTSQGKAYRQPKQKLDFYTLLDNWVLRDEAPAVEQQHYVIANLIRGGVFGEAEEK</sequence>
<comment type="function">
    <text evidence="2 4 5">CRISPR (clustered regularly interspaced short palindromic repeat) is an adaptive immune system that provides protection against mobile genetic elements (viruses, transposable elements and conjugative plasmids). CRISPR clusters contain sequences complementary to antecedent mobile elements and target invading nucleic acids. CRISPR clusters are transcribed and processed into CRISPR RNA (crRNA). Cas3 and Cascade participate in CRISPR interference, the third stage of CRISPR immunity (Potential). Involved in crRNA production or stability. The Csy ribonucleoprotein complex binds target ssDNA with high affinity but target dsDNA with much lower affinity.</text>
</comment>
<comment type="subunit">
    <text evidence="3 4">Part of the Csy ribonucleoprotein complex with a probable stoichiometry of Csy1(1),Csy2(1),Csy3(6),Cas6/Csy4(1)-crRNA(1). A Csy3(6),Cas6/Csy4(1)-crRNA(1) subcomplex is also formed.</text>
</comment>
<comment type="interaction">
    <interactant intactId="EBI-15924841">
        <id>Q02MM1</id>
    </interactant>
    <interactant intactId="EBI-15924852">
        <id>Q02MM2</id>
        <label>cas6f</label>
    </interactant>
    <organismsDiffer>false</organismsDiffer>
    <experiments>12</experiments>
</comment>
<comment type="mass spectrometry" mass="37401.0" error="1.2" method="Electrospray" evidence="3"/>
<comment type="disruption phenotype">
    <text evidence="1 2">Mutants lose phage DMS3 infection-dependent inhibition of biofilm formation while there is normal biofilm formation in the absence of phage infection. Decreased production of crRNA in the presence or absence of phage. Disruption of the entire Y.pestis-subtype CRISPR region disrupts crRNA production but does not alter phage resistance (possibly OLNs PA14_33350 to PA14_33310, and the flanking CRISPR loci), indicating this CRISPR is not involved in phage resistance.</text>
</comment>
<comment type="miscellaneous">
    <text>In this bacteria, Y.pestis-subtype CRISPRs do not confer resistance to phage DMS3 or MP22, but instead are required for DMS3 infection-dependent inhibition of biofilm formation and possibly motility.</text>
</comment>
<comment type="similarity">
    <text evidence="5">Belongs to the CRISPR-associated Csy3 family.</text>
</comment>
<gene>
    <name type="primary">csy3</name>
    <name type="synonym">csy1-3</name>
    <name type="ordered locus">PA14_33310</name>
</gene>
<proteinExistence type="evidence at protein level"/>